<protein>
    <recommendedName>
        <fullName evidence="1">Adenosine deaminase</fullName>
        <ecNumber evidence="1">3.5.4.4</ecNumber>
    </recommendedName>
    <alternativeName>
        <fullName evidence="1">Adenosine aminohydrolase</fullName>
    </alternativeName>
</protein>
<organism>
    <name type="scientific">Escherichia coli O1:K1 / APEC</name>
    <dbReference type="NCBI Taxonomy" id="405955"/>
    <lineage>
        <taxon>Bacteria</taxon>
        <taxon>Pseudomonadati</taxon>
        <taxon>Pseudomonadota</taxon>
        <taxon>Gammaproteobacteria</taxon>
        <taxon>Enterobacterales</taxon>
        <taxon>Enterobacteriaceae</taxon>
        <taxon>Escherichia</taxon>
    </lineage>
</organism>
<reference key="1">
    <citation type="journal article" date="2007" name="J. Bacteriol.">
        <title>The genome sequence of avian pathogenic Escherichia coli strain O1:K1:H7 shares strong similarities with human extraintestinal pathogenic E. coli genomes.</title>
        <authorList>
            <person name="Johnson T.J."/>
            <person name="Kariyawasam S."/>
            <person name="Wannemuehler Y."/>
            <person name="Mangiamele P."/>
            <person name="Johnson S.J."/>
            <person name="Doetkott C."/>
            <person name="Skyberg J.A."/>
            <person name="Lynne A.M."/>
            <person name="Johnson J.R."/>
            <person name="Nolan L.K."/>
        </authorList>
    </citation>
    <scope>NUCLEOTIDE SEQUENCE [LARGE SCALE GENOMIC DNA]</scope>
</reference>
<accession>A1ABG8</accession>
<sequence>MIDTTLPLTDIHRHLDGNIRPQTILELGRQYNISLPAQSLETLIPHVQVIANEPDLVSFLTKLDWGVKVLASLDACRRVAFENIEDAARNGLHYVELRFSPGYMAMAHQLPVAGVVEAVIDGVREGCRTFGVQAKLIGIMSRTFGEAACQQELEAFLAHRDQITALDLAGDELGFPGSLFLSHFNRARDAGWHITVHAGEAAGPESIWQAIRELGAERIGHGVKAIEDRALMDFLAEQQIGIESCLTSNIQTSTVADLAAHPLKTFLEHGIRASINTDDPGVQGVDIIHEYTVAAPAAGLSREQIRQAQINGLEMAFLSAEEKRALREKVAAK</sequence>
<keyword id="KW-0378">Hydrolase</keyword>
<keyword id="KW-0479">Metal-binding</keyword>
<keyword id="KW-0546">Nucleotide metabolism</keyword>
<keyword id="KW-1185">Reference proteome</keyword>
<keyword id="KW-0862">Zinc</keyword>
<feature type="chain" id="PRO_1000017659" description="Adenosine deaminase">
    <location>
        <begin position="1"/>
        <end position="333"/>
    </location>
</feature>
<feature type="active site" description="Proton donor" evidence="1">
    <location>
        <position position="200"/>
    </location>
</feature>
<feature type="binding site" evidence="1">
    <location>
        <position position="12"/>
    </location>
    <ligand>
        <name>Zn(2+)</name>
        <dbReference type="ChEBI" id="CHEBI:29105"/>
        <note>catalytic</note>
    </ligand>
</feature>
<feature type="binding site" evidence="1">
    <location>
        <position position="14"/>
    </location>
    <ligand>
        <name>substrate</name>
    </ligand>
</feature>
<feature type="binding site" evidence="1">
    <location>
        <position position="14"/>
    </location>
    <ligand>
        <name>Zn(2+)</name>
        <dbReference type="ChEBI" id="CHEBI:29105"/>
        <note>catalytic</note>
    </ligand>
</feature>
<feature type="binding site" evidence="1">
    <location>
        <position position="16"/>
    </location>
    <ligand>
        <name>substrate</name>
    </ligand>
</feature>
<feature type="binding site" evidence="1">
    <location>
        <position position="170"/>
    </location>
    <ligand>
        <name>substrate</name>
    </ligand>
</feature>
<feature type="binding site" evidence="1">
    <location>
        <position position="197"/>
    </location>
    <ligand>
        <name>Zn(2+)</name>
        <dbReference type="ChEBI" id="CHEBI:29105"/>
        <note>catalytic</note>
    </ligand>
</feature>
<feature type="binding site" evidence="1">
    <location>
        <position position="278"/>
    </location>
    <ligand>
        <name>Zn(2+)</name>
        <dbReference type="ChEBI" id="CHEBI:29105"/>
        <note>catalytic</note>
    </ligand>
</feature>
<feature type="binding site" evidence="1">
    <location>
        <position position="279"/>
    </location>
    <ligand>
        <name>substrate</name>
    </ligand>
</feature>
<feature type="site" description="Important for catalytic activity" evidence="1">
    <location>
        <position position="221"/>
    </location>
</feature>
<dbReference type="EC" id="3.5.4.4" evidence="1"/>
<dbReference type="EMBL" id="CP000468">
    <property type="protein sequence ID" value="ABJ01008.1"/>
    <property type="molecule type" value="Genomic_DNA"/>
</dbReference>
<dbReference type="RefSeq" id="WP_000567511.1">
    <property type="nucleotide sequence ID" value="NZ_CADILS010000002.1"/>
</dbReference>
<dbReference type="SMR" id="A1ABG8"/>
<dbReference type="KEGG" id="ecv:APECO1_706"/>
<dbReference type="HOGENOM" id="CLU_039228_0_2_6"/>
<dbReference type="Proteomes" id="UP000008216">
    <property type="component" value="Chromosome"/>
</dbReference>
<dbReference type="GO" id="GO:0005829">
    <property type="term" value="C:cytosol"/>
    <property type="evidence" value="ECO:0007669"/>
    <property type="project" value="TreeGrafter"/>
</dbReference>
<dbReference type="GO" id="GO:0046936">
    <property type="term" value="F:2'-deoxyadenosine deaminase activity"/>
    <property type="evidence" value="ECO:0007669"/>
    <property type="project" value="RHEA"/>
</dbReference>
<dbReference type="GO" id="GO:0004000">
    <property type="term" value="F:adenosine deaminase activity"/>
    <property type="evidence" value="ECO:0007669"/>
    <property type="project" value="UniProtKB-UniRule"/>
</dbReference>
<dbReference type="GO" id="GO:0008270">
    <property type="term" value="F:zinc ion binding"/>
    <property type="evidence" value="ECO:0007669"/>
    <property type="project" value="UniProtKB-UniRule"/>
</dbReference>
<dbReference type="GO" id="GO:0006154">
    <property type="term" value="P:adenosine catabolic process"/>
    <property type="evidence" value="ECO:0007669"/>
    <property type="project" value="TreeGrafter"/>
</dbReference>
<dbReference type="GO" id="GO:0043103">
    <property type="term" value="P:hypoxanthine salvage"/>
    <property type="evidence" value="ECO:0007669"/>
    <property type="project" value="TreeGrafter"/>
</dbReference>
<dbReference type="GO" id="GO:0046103">
    <property type="term" value="P:inosine biosynthetic process"/>
    <property type="evidence" value="ECO:0007669"/>
    <property type="project" value="TreeGrafter"/>
</dbReference>
<dbReference type="GO" id="GO:0009117">
    <property type="term" value="P:nucleotide metabolic process"/>
    <property type="evidence" value="ECO:0007669"/>
    <property type="project" value="UniProtKB-KW"/>
</dbReference>
<dbReference type="GO" id="GO:0009168">
    <property type="term" value="P:purine ribonucleoside monophosphate biosynthetic process"/>
    <property type="evidence" value="ECO:0007669"/>
    <property type="project" value="UniProtKB-UniRule"/>
</dbReference>
<dbReference type="CDD" id="cd01320">
    <property type="entry name" value="ADA"/>
    <property type="match status" value="1"/>
</dbReference>
<dbReference type="FunFam" id="3.20.20.140:FF:000009">
    <property type="entry name" value="Adenosine deaminase"/>
    <property type="match status" value="1"/>
</dbReference>
<dbReference type="Gene3D" id="3.20.20.140">
    <property type="entry name" value="Metal-dependent hydrolases"/>
    <property type="match status" value="1"/>
</dbReference>
<dbReference type="HAMAP" id="MF_00540">
    <property type="entry name" value="A_deaminase"/>
    <property type="match status" value="1"/>
</dbReference>
<dbReference type="InterPro" id="IPR006650">
    <property type="entry name" value="A/AMP_deam_AS"/>
</dbReference>
<dbReference type="InterPro" id="IPR028893">
    <property type="entry name" value="A_deaminase"/>
</dbReference>
<dbReference type="InterPro" id="IPR001365">
    <property type="entry name" value="A_deaminase_dom"/>
</dbReference>
<dbReference type="InterPro" id="IPR006330">
    <property type="entry name" value="Ado/ade_deaminase"/>
</dbReference>
<dbReference type="InterPro" id="IPR032466">
    <property type="entry name" value="Metal_Hydrolase"/>
</dbReference>
<dbReference type="NCBIfam" id="TIGR01430">
    <property type="entry name" value="aden_deam"/>
    <property type="match status" value="1"/>
</dbReference>
<dbReference type="NCBIfam" id="NF006846">
    <property type="entry name" value="PRK09358.1-1"/>
    <property type="match status" value="1"/>
</dbReference>
<dbReference type="PANTHER" id="PTHR11409">
    <property type="entry name" value="ADENOSINE DEAMINASE"/>
    <property type="match status" value="1"/>
</dbReference>
<dbReference type="PANTHER" id="PTHR11409:SF43">
    <property type="entry name" value="ADENOSINE DEAMINASE"/>
    <property type="match status" value="1"/>
</dbReference>
<dbReference type="Pfam" id="PF00962">
    <property type="entry name" value="A_deaminase"/>
    <property type="match status" value="1"/>
</dbReference>
<dbReference type="SUPFAM" id="SSF51556">
    <property type="entry name" value="Metallo-dependent hydrolases"/>
    <property type="match status" value="1"/>
</dbReference>
<dbReference type="PROSITE" id="PS00485">
    <property type="entry name" value="A_DEAMINASE"/>
    <property type="match status" value="1"/>
</dbReference>
<evidence type="ECO:0000255" key="1">
    <source>
        <dbReference type="HAMAP-Rule" id="MF_00540"/>
    </source>
</evidence>
<name>ADD_ECOK1</name>
<proteinExistence type="inferred from homology"/>
<comment type="function">
    <text evidence="1">Catalyzes the hydrolytic deamination of adenosine and 2-deoxyadenosine.</text>
</comment>
<comment type="catalytic activity">
    <reaction evidence="1">
        <text>adenosine + H2O + H(+) = inosine + NH4(+)</text>
        <dbReference type="Rhea" id="RHEA:24408"/>
        <dbReference type="ChEBI" id="CHEBI:15377"/>
        <dbReference type="ChEBI" id="CHEBI:15378"/>
        <dbReference type="ChEBI" id="CHEBI:16335"/>
        <dbReference type="ChEBI" id="CHEBI:17596"/>
        <dbReference type="ChEBI" id="CHEBI:28938"/>
        <dbReference type="EC" id="3.5.4.4"/>
    </reaction>
    <physiologicalReaction direction="left-to-right" evidence="1">
        <dbReference type="Rhea" id="RHEA:24409"/>
    </physiologicalReaction>
</comment>
<comment type="catalytic activity">
    <reaction evidence="1">
        <text>2'-deoxyadenosine + H2O + H(+) = 2'-deoxyinosine + NH4(+)</text>
        <dbReference type="Rhea" id="RHEA:28190"/>
        <dbReference type="ChEBI" id="CHEBI:15377"/>
        <dbReference type="ChEBI" id="CHEBI:15378"/>
        <dbReference type="ChEBI" id="CHEBI:17256"/>
        <dbReference type="ChEBI" id="CHEBI:28938"/>
        <dbReference type="ChEBI" id="CHEBI:28997"/>
        <dbReference type="EC" id="3.5.4.4"/>
    </reaction>
    <physiologicalReaction direction="left-to-right" evidence="1">
        <dbReference type="Rhea" id="RHEA:28191"/>
    </physiologicalReaction>
</comment>
<comment type="cofactor">
    <cofactor evidence="1">
        <name>Zn(2+)</name>
        <dbReference type="ChEBI" id="CHEBI:29105"/>
    </cofactor>
    <text evidence="1">Binds 1 zinc ion per subunit.</text>
</comment>
<comment type="similarity">
    <text evidence="1">Belongs to the metallo-dependent hydrolases superfamily. Adenosine and AMP deaminases family. Adenosine deaminase subfamily.</text>
</comment>
<gene>
    <name evidence="1" type="primary">add</name>
    <name type="ordered locus">Ecok1_15140</name>
    <name type="ORF">APECO1_706</name>
</gene>